<accession>Q50383</accession>
<proteinExistence type="inferred from homology"/>
<sequence length="120" mass="12390">PYEKIGAELVKEVAKKTDDVAGDGTTTATVLAQALVHEGLRNVAAGANPLSLKRGIEKAVEKVTETLLKGAKEVETKEQIAATAAISAGDQSIGDLIAEAMDKVGNEGVITVEESNTFGL</sequence>
<feature type="chain" id="PRO_0000063449" description="Chaperonin GroEL">
    <location>
        <begin position="1" status="less than"/>
        <end position="120" status="greater than"/>
    </location>
</feature>
<feature type="binding site" evidence="1">
    <location>
        <begin position="23"/>
        <end position="27"/>
    </location>
    <ligand>
        <name>ATP</name>
        <dbReference type="ChEBI" id="CHEBI:30616"/>
    </ligand>
</feature>
<feature type="non-terminal residue">
    <location>
        <position position="1"/>
    </location>
</feature>
<feature type="non-terminal residue">
    <location>
        <position position="120"/>
    </location>
</feature>
<gene>
    <name evidence="1" type="primary">groEL</name>
    <name evidence="1" type="synonym">groL</name>
    <name type="synonym">mopA</name>
</gene>
<evidence type="ECO:0000255" key="1">
    <source>
        <dbReference type="HAMAP-Rule" id="MF_00600"/>
    </source>
</evidence>
<evidence type="ECO:0000305" key="2"/>
<keyword id="KW-0067">ATP-binding</keyword>
<keyword id="KW-0143">Chaperone</keyword>
<keyword id="KW-0963">Cytoplasm</keyword>
<keyword id="KW-0413">Isomerase</keyword>
<keyword id="KW-0547">Nucleotide-binding</keyword>
<keyword id="KW-0346">Stress response</keyword>
<name>CH60_MYCSH</name>
<dbReference type="EC" id="5.6.1.7" evidence="1"/>
<dbReference type="EMBL" id="U17956">
    <property type="protein sequence ID" value="AAB39075.1"/>
    <property type="molecule type" value="Genomic_DNA"/>
</dbReference>
<dbReference type="SMR" id="Q50383"/>
<dbReference type="STRING" id="29313.BHQ16_17975"/>
<dbReference type="GO" id="GO:0005737">
    <property type="term" value="C:cytoplasm"/>
    <property type="evidence" value="ECO:0007669"/>
    <property type="project" value="UniProtKB-SubCell"/>
</dbReference>
<dbReference type="GO" id="GO:0005524">
    <property type="term" value="F:ATP binding"/>
    <property type="evidence" value="ECO:0007669"/>
    <property type="project" value="UniProtKB-KW"/>
</dbReference>
<dbReference type="GO" id="GO:0140662">
    <property type="term" value="F:ATP-dependent protein folding chaperone"/>
    <property type="evidence" value="ECO:0007669"/>
    <property type="project" value="InterPro"/>
</dbReference>
<dbReference type="GO" id="GO:0016853">
    <property type="term" value="F:isomerase activity"/>
    <property type="evidence" value="ECO:0007669"/>
    <property type="project" value="UniProtKB-KW"/>
</dbReference>
<dbReference type="GO" id="GO:0042026">
    <property type="term" value="P:protein refolding"/>
    <property type="evidence" value="ECO:0007669"/>
    <property type="project" value="InterPro"/>
</dbReference>
<dbReference type="Gene3D" id="1.10.560.10">
    <property type="entry name" value="GroEL-like equatorial domain"/>
    <property type="match status" value="1"/>
</dbReference>
<dbReference type="Gene3D" id="3.30.260.10">
    <property type="entry name" value="TCP-1-like chaperonin intermediate domain"/>
    <property type="match status" value="1"/>
</dbReference>
<dbReference type="InterPro" id="IPR001844">
    <property type="entry name" value="Cpn60/GroEL"/>
</dbReference>
<dbReference type="InterPro" id="IPR002423">
    <property type="entry name" value="Cpn60/GroEL/TCP-1"/>
</dbReference>
<dbReference type="InterPro" id="IPR027413">
    <property type="entry name" value="GROEL-like_equatorial_sf"/>
</dbReference>
<dbReference type="InterPro" id="IPR027410">
    <property type="entry name" value="TCP-1-like_intermed_sf"/>
</dbReference>
<dbReference type="PANTHER" id="PTHR45633">
    <property type="entry name" value="60 KDA HEAT SHOCK PROTEIN, MITOCHONDRIAL"/>
    <property type="match status" value="1"/>
</dbReference>
<dbReference type="Pfam" id="PF00118">
    <property type="entry name" value="Cpn60_TCP1"/>
    <property type="match status" value="1"/>
</dbReference>
<dbReference type="SUPFAM" id="SSF48592">
    <property type="entry name" value="GroEL equatorial domain-like"/>
    <property type="match status" value="1"/>
</dbReference>
<comment type="function">
    <text evidence="1">Together with its co-chaperonin GroES, plays an essential role in assisting protein folding. The GroEL-GroES system forms a nano-cage that allows encapsulation of the non-native substrate proteins and provides a physical environment optimized to promote and accelerate protein folding.</text>
</comment>
<comment type="catalytic activity">
    <reaction evidence="1">
        <text>ATP + H2O + a folded polypeptide = ADP + phosphate + an unfolded polypeptide.</text>
        <dbReference type="EC" id="5.6.1.7"/>
    </reaction>
</comment>
<comment type="subunit">
    <text evidence="1">Forms a cylinder of 14 subunits composed of two heptameric rings stacked back-to-back. Interacts with the co-chaperonin GroES.</text>
</comment>
<comment type="subcellular location">
    <subcellularLocation>
        <location evidence="1">Cytoplasm</location>
    </subcellularLocation>
</comment>
<comment type="similarity">
    <text evidence="1 2">Belongs to the chaperonin (HSP60) family.</text>
</comment>
<organism>
    <name type="scientific">Mycobacterium shimoidei</name>
    <dbReference type="NCBI Taxonomy" id="29313"/>
    <lineage>
        <taxon>Bacteria</taxon>
        <taxon>Bacillati</taxon>
        <taxon>Actinomycetota</taxon>
        <taxon>Actinomycetes</taxon>
        <taxon>Mycobacteriales</taxon>
        <taxon>Mycobacteriaceae</taxon>
        <taxon>Mycobacterium</taxon>
    </lineage>
</organism>
<protein>
    <recommendedName>
        <fullName evidence="1">Chaperonin GroEL</fullName>
        <ecNumber evidence="1">5.6.1.7</ecNumber>
    </recommendedName>
    <alternativeName>
        <fullName evidence="1">60 kDa chaperonin</fullName>
    </alternativeName>
    <alternativeName>
        <fullName>65 kDa heat shock protein</fullName>
    </alternativeName>
    <alternativeName>
        <fullName evidence="1">Chaperonin-60</fullName>
        <shortName evidence="1">Cpn60</shortName>
    </alternativeName>
</protein>
<reference key="1">
    <citation type="journal article" date="1995" name="Arch. Pathol. Lab. Med.">
        <title>Rapid Mycobacterium species assignment and unambiguous identification of mutations associated with antimicrobial resistance in Mycobacterium tuberculosis by automated DNA sequencing.</title>
        <authorList>
            <person name="Kapur V."/>
            <person name="Li L.L."/>
            <person name="Hamrick M.R."/>
            <person name="Plikaytis B.B."/>
            <person name="Shinnick T.M."/>
            <person name="Telenti A."/>
            <person name="Jacobs W.R. Jr."/>
            <person name="Banerjee A."/>
            <person name="Cole S."/>
            <person name="Yuen K.Y."/>
            <person name="Clarridge J.E."/>
            <person name="Kreiswirth B.N."/>
            <person name="Musser J.M."/>
        </authorList>
    </citation>
    <scope>NUCLEOTIDE SEQUENCE [GENOMIC DNA]</scope>
    <source>
        <strain>248</strain>
    </source>
</reference>